<evidence type="ECO:0000250" key="1"/>
<evidence type="ECO:0000255" key="2"/>
<evidence type="ECO:0000303" key="3">
    <source ref="1"/>
</evidence>
<evidence type="ECO:0000305" key="4"/>
<dbReference type="EMBL" id="AY325201">
    <property type="protein sequence ID" value="AAP92602.1"/>
    <property type="molecule type" value="mRNA"/>
</dbReference>
<dbReference type="EMBL" id="BC105824">
    <property type="protein sequence ID" value="AAI05825.1"/>
    <property type="molecule type" value="mRNA"/>
</dbReference>
<dbReference type="RefSeq" id="NP_001029175.1">
    <molecule id="Q7TP48-1"/>
    <property type="nucleotide sequence ID" value="NM_001034003.2"/>
</dbReference>
<dbReference type="RefSeq" id="XP_008760584.1">
    <property type="nucleotide sequence ID" value="XM_008762362.2"/>
</dbReference>
<dbReference type="RefSeq" id="XP_063140360.1">
    <molecule id="Q7TP48-1"/>
    <property type="nucleotide sequence ID" value="XM_063284290.1"/>
</dbReference>
<dbReference type="SMR" id="Q7TP48"/>
<dbReference type="FunCoup" id="Q7TP48">
    <property type="interactions" value="1627"/>
</dbReference>
<dbReference type="STRING" id="10116.ENSRNOP00000073800"/>
<dbReference type="GlyCosmos" id="Q7TP48">
    <property type="glycosylation" value="1 site, 2 glycans"/>
</dbReference>
<dbReference type="GlyGen" id="Q7TP48">
    <property type="glycosylation" value="1 site, 2 N-linked glycans (1 site)"/>
</dbReference>
<dbReference type="iPTMnet" id="Q7TP48"/>
<dbReference type="PhosphoSitePlus" id="Q7TP48"/>
<dbReference type="jPOST" id="Q7TP48"/>
<dbReference type="GeneID" id="366227"/>
<dbReference type="KEGG" id="rno:366227"/>
<dbReference type="UCSC" id="RGD:1308874">
    <molecule id="Q7TP48-1"/>
    <property type="organism name" value="rat"/>
</dbReference>
<dbReference type="AGR" id="RGD:1308874"/>
<dbReference type="CTD" id="57136"/>
<dbReference type="RGD" id="1308874">
    <property type="gene designation" value="Apmap"/>
</dbReference>
<dbReference type="VEuPathDB" id="HostDB:ENSRNOG00000006795"/>
<dbReference type="HOGENOM" id="CLU_023267_0_0_1"/>
<dbReference type="InParanoid" id="Q7TP48"/>
<dbReference type="OrthoDB" id="5307922at2759"/>
<dbReference type="PhylomeDB" id="Q7TP48"/>
<dbReference type="PRO" id="PR:Q7TP48"/>
<dbReference type="Proteomes" id="UP000002494">
    <property type="component" value="Chromosome 3"/>
</dbReference>
<dbReference type="Bgee" id="ENSRNOG00000006795">
    <property type="expression patterns" value="Expressed in adult mammalian kidney and 19 other cell types or tissues"/>
</dbReference>
<dbReference type="ExpressionAtlas" id="Q7TP48">
    <property type="expression patterns" value="baseline and differential"/>
</dbReference>
<dbReference type="GO" id="GO:0009986">
    <property type="term" value="C:cell surface"/>
    <property type="evidence" value="ECO:0000266"/>
    <property type="project" value="RGD"/>
</dbReference>
<dbReference type="GO" id="GO:0016020">
    <property type="term" value="C:membrane"/>
    <property type="evidence" value="ECO:0000266"/>
    <property type="project" value="RGD"/>
</dbReference>
<dbReference type="GO" id="GO:0004064">
    <property type="term" value="F:arylesterase activity"/>
    <property type="evidence" value="ECO:0000266"/>
    <property type="project" value="RGD"/>
</dbReference>
<dbReference type="FunFam" id="2.120.10.30:FF:000041">
    <property type="entry name" value="adipocyte plasma membrane-associated protein"/>
    <property type="match status" value="1"/>
</dbReference>
<dbReference type="Gene3D" id="2.120.10.30">
    <property type="entry name" value="TolB, C-terminal domain"/>
    <property type="match status" value="1"/>
</dbReference>
<dbReference type="InterPro" id="IPR011042">
    <property type="entry name" value="6-blade_b-propeller_TolB-like"/>
</dbReference>
<dbReference type="InterPro" id="IPR018119">
    <property type="entry name" value="Strictosidine_synth_cons-reg"/>
</dbReference>
<dbReference type="PANTHER" id="PTHR10426:SF130">
    <property type="entry name" value="ADIPOCYTE PLASMA MEMBRANE-ASSOCIATED PROTEIN"/>
    <property type="match status" value="1"/>
</dbReference>
<dbReference type="PANTHER" id="PTHR10426">
    <property type="entry name" value="STRICTOSIDINE SYNTHASE-RELATED"/>
    <property type="match status" value="1"/>
</dbReference>
<dbReference type="Pfam" id="PF20067">
    <property type="entry name" value="SSL_N"/>
    <property type="match status" value="1"/>
</dbReference>
<dbReference type="Pfam" id="PF03088">
    <property type="entry name" value="Str_synth"/>
    <property type="match status" value="1"/>
</dbReference>
<dbReference type="SUPFAM" id="SSF63829">
    <property type="entry name" value="Calcium-dependent phosphotriesterase"/>
    <property type="match status" value="1"/>
</dbReference>
<keyword id="KW-0025">Alternative splicing</keyword>
<keyword id="KW-0325">Glycoprotein</keyword>
<keyword id="KW-0472">Membrane</keyword>
<keyword id="KW-1185">Reference proteome</keyword>
<keyword id="KW-0812">Transmembrane</keyword>
<keyword id="KW-1133">Transmembrane helix</keyword>
<gene>
    <name type="primary">Apmap</name>
    <name type="ORF">Ab2-305</name>
</gene>
<feature type="chain" id="PRO_0000370858" description="Adipocyte plasma membrane-associated protein">
    <location>
        <begin position="1"/>
        <end position="376"/>
    </location>
</feature>
<feature type="transmembrane region" description="Helical" evidence="2">
    <location>
        <begin position="1"/>
        <end position="17"/>
    </location>
</feature>
<feature type="glycosylation site" description="N-linked (GlcNAc...) asparagine" evidence="2">
    <location>
        <position position="120"/>
    </location>
</feature>
<feature type="splice variant" id="VSP_036994" description="In isoform 2." evidence="3">
    <original>D</original>
    <variation>AVYWVTPLLWTQDSRSASVPVDVKH</variation>
    <location>
        <position position="70"/>
    </location>
</feature>
<feature type="splice variant" id="VSP_036995" description="In isoform 2." evidence="3">
    <original>R</original>
    <variation>RQVVVNVLKGWMYTGLCMSS</variation>
    <location>
        <position position="198"/>
    </location>
</feature>
<feature type="splice variant" id="VSP_036996" description="In isoform 2." evidence="3">
    <original>VSDSGAFRRSLHDPDGQVVTYVSEAHEHDGYLYLGSFRSPFICRLSLQSI</original>
    <variation>PLTVVPSGEVCMILMDRWSPM</variation>
    <location>
        <begin position="327"/>
        <end position="376"/>
    </location>
</feature>
<feature type="sequence conflict" description="In Ref. 1; AAP92602." evidence="4" ref="1">
    <original>F</original>
    <variation>I</variation>
    <location>
        <position position="309"/>
    </location>
</feature>
<feature type="sequence conflict" description="In Ref. 1; AAP92602." evidence="4" ref="1">
    <original>V</original>
    <variation>A</variation>
    <location>
        <position position="314"/>
    </location>
</feature>
<accession>Q7TP48</accession>
<accession>Q3KR93</accession>
<organism>
    <name type="scientific">Rattus norvegicus</name>
    <name type="common">Rat</name>
    <dbReference type="NCBI Taxonomy" id="10116"/>
    <lineage>
        <taxon>Eukaryota</taxon>
        <taxon>Metazoa</taxon>
        <taxon>Chordata</taxon>
        <taxon>Craniata</taxon>
        <taxon>Vertebrata</taxon>
        <taxon>Euteleostomi</taxon>
        <taxon>Mammalia</taxon>
        <taxon>Eutheria</taxon>
        <taxon>Euarchontoglires</taxon>
        <taxon>Glires</taxon>
        <taxon>Rodentia</taxon>
        <taxon>Myomorpha</taxon>
        <taxon>Muroidea</taxon>
        <taxon>Muridae</taxon>
        <taxon>Murinae</taxon>
        <taxon>Rattus</taxon>
    </lineage>
</organism>
<proteinExistence type="evidence at transcript level"/>
<protein>
    <recommendedName>
        <fullName>Adipocyte plasma membrane-associated protein</fullName>
    </recommendedName>
</protein>
<reference key="1">
    <citation type="submission" date="2003-06" db="EMBL/GenBank/DDBJ databases">
        <title>Liver regeneration after PH.</title>
        <authorList>
            <person name="Xu C.S."/>
            <person name="Li W.Q."/>
            <person name="Li Y.C."/>
            <person name="Zhao L.F."/>
            <person name="Ma H."/>
            <person name="Wang L."/>
            <person name="Wang S.F."/>
            <person name="Han H.P."/>
            <person name="Wang G.P."/>
            <person name="Chai L.Q."/>
            <person name="Yuan J.Y."/>
            <person name="Yang K.J."/>
            <person name="Yan H.M."/>
            <person name="Chang C.F."/>
            <person name="Shi J.B."/>
            <person name="Rahman S."/>
            <person name="Wang Q.N."/>
            <person name="Zhang J.B."/>
        </authorList>
    </citation>
    <scope>NUCLEOTIDE SEQUENCE [LARGE SCALE MRNA] (ISOFORM 2)</scope>
</reference>
<reference key="2">
    <citation type="journal article" date="2004" name="Genome Res.">
        <title>The status, quality, and expansion of the NIH full-length cDNA project: the Mammalian Gene Collection (MGC).</title>
        <authorList>
            <consortium name="The MGC Project Team"/>
        </authorList>
    </citation>
    <scope>NUCLEOTIDE SEQUENCE [LARGE SCALE MRNA] (ISOFORM 1)</scope>
    <source>
        <tissue>Liver</tissue>
    </source>
</reference>
<comment type="function">
    <text evidence="1">Exhibits strong arylesterase activity with beta-naphthyl acetate and phenyl acetate. May play a role in adipocyte differentiation (By similarity).</text>
</comment>
<comment type="subcellular location">
    <subcellularLocation>
        <location evidence="4">Membrane</location>
        <topology evidence="4">Single-pass membrane protein</topology>
    </subcellularLocation>
</comment>
<comment type="alternative products">
    <event type="alternative splicing"/>
    <isoform>
        <id>Q7TP48-1</id>
        <name>1</name>
        <sequence type="displayed"/>
    </isoform>
    <isoform>
        <id>Q7TP48-2</id>
        <name>2</name>
        <sequence type="described" ref="VSP_036994 VSP_036995 VSP_036996"/>
    </isoform>
</comment>
<comment type="similarity">
    <text evidence="4">Belongs to the strictosidine synthase family.</text>
</comment>
<name>APMAP_RAT</name>
<sequence length="376" mass="42062">MTFLMLAVSLAIPLLGAMMLLESPIDPQSFSFKEPPFMFGVLQPNTKLRQAERLFENQLNGPESIVNIGDVLFTGTADGRVVKLENGEIETIARFGSGPCKTRDDEPTCGRPLGIRVGPNGTLFVVDAYKGLFEVNPQKRSVKLLLSSETPIEGKKMSFVNDLTITRDGRKIYFTDSSSKWQRRDYLLLVMEGTDDGRLLEYDTVTKEVKVLLDQLQFPNGVQLSPEEDFVLVAETAMARIRRVYVSGLMKGGADMFVENMPGFPDNIRPSSSGGYWVAAATIRANPGFSMLDFLSDKPFIKRMIFKLFSQETVMKFVPRYSLVLEVSDSGAFRRSLHDPDGQVVTYVSEAHEHDGYLYLGSFRSPFICRLSLQSI</sequence>